<name>PVK3_GROGR</name>
<feature type="peptide" id="PRO_0000378833" description="Periviscerokinin-3" evidence="2">
    <location>
        <begin position="1"/>
        <end position="11"/>
    </location>
</feature>
<feature type="modified residue" description="Valine amide" evidence="2">
    <location>
        <position position="11"/>
    </location>
</feature>
<comment type="function">
    <text evidence="4">Mediates visceral muscle contractile activity (myotropic activity).</text>
</comment>
<comment type="subcellular location">
    <subcellularLocation>
        <location evidence="4">Secreted</location>
    </subcellularLocation>
</comment>
<comment type="similarity">
    <text evidence="1">Belongs to the periviscerokinin family.</text>
</comment>
<proteinExistence type="evidence at protein level"/>
<dbReference type="GO" id="GO:0005576">
    <property type="term" value="C:extracellular region"/>
    <property type="evidence" value="ECO:0007669"/>
    <property type="project" value="UniProtKB-SubCell"/>
</dbReference>
<dbReference type="GO" id="GO:0007218">
    <property type="term" value="P:neuropeptide signaling pathway"/>
    <property type="evidence" value="ECO:0007669"/>
    <property type="project" value="UniProtKB-KW"/>
</dbReference>
<dbReference type="InterPro" id="IPR013231">
    <property type="entry name" value="Periviscerokinin"/>
</dbReference>
<dbReference type="Pfam" id="PF08259">
    <property type="entry name" value="Periviscerokin"/>
    <property type="match status" value="1"/>
</dbReference>
<protein>
    <recommendedName>
        <fullName evidence="3">Periviscerokinin-3</fullName>
        <shortName evidence="3">GroGr-PVK-3</shortName>
    </recommendedName>
</protein>
<keyword id="KW-0027">Amidation</keyword>
<keyword id="KW-0903">Direct protein sequencing</keyword>
<keyword id="KW-0527">Neuropeptide</keyword>
<keyword id="KW-0964">Secreted</keyword>
<organism>
    <name type="scientific">Gromphadorhina grandidieri</name>
    <name type="common">Cockroach</name>
    <dbReference type="NCBI Taxonomy" id="521511"/>
    <lineage>
        <taxon>Eukaryota</taxon>
        <taxon>Metazoa</taxon>
        <taxon>Ecdysozoa</taxon>
        <taxon>Arthropoda</taxon>
        <taxon>Hexapoda</taxon>
        <taxon>Insecta</taxon>
        <taxon>Pterygota</taxon>
        <taxon>Neoptera</taxon>
        <taxon>Polyneoptera</taxon>
        <taxon>Dictyoptera</taxon>
        <taxon>Blattodea</taxon>
        <taxon>Blaberoidea</taxon>
        <taxon>Blaberidae</taxon>
        <taxon>Oxyhaloinae</taxon>
        <taxon>Gromphadorhina</taxon>
    </lineage>
</organism>
<reference evidence="4" key="1">
    <citation type="journal article" date="2009" name="BMC Evol. Biol.">
        <title>A proteomic approach for studying insect phylogeny: CAPA peptides of ancient insect taxa (Dictyoptera, Blattoptera) as a test case.</title>
        <authorList>
            <person name="Roth S."/>
            <person name="Fromm B."/>
            <person name="Gaede G."/>
            <person name="Predel R."/>
        </authorList>
    </citation>
    <scope>PROTEIN SEQUENCE</scope>
    <scope>AMIDATION AT VAL-11</scope>
    <source>
        <tissue evidence="2">Abdominal perisympathetic organs</tissue>
    </source>
</reference>
<accession>P85637</accession>
<sequence length="11" mass="1147">GSSGMIPFPRV</sequence>
<evidence type="ECO:0000255" key="1"/>
<evidence type="ECO:0000269" key="2">
    <source>
    </source>
</evidence>
<evidence type="ECO:0000303" key="3">
    <source>
    </source>
</evidence>
<evidence type="ECO:0000305" key="4"/>